<dbReference type="EMBL" id="AB017564">
    <property type="protein sequence ID" value="BAA33196.1"/>
    <property type="molecule type" value="mRNA"/>
</dbReference>
<dbReference type="EMBL" id="AC025294">
    <property type="protein sequence ID" value="AAG50875.1"/>
    <property type="molecule type" value="Genomic_DNA"/>
</dbReference>
<dbReference type="EMBL" id="CP002684">
    <property type="protein sequence ID" value="AEE32704.1"/>
    <property type="molecule type" value="Genomic_DNA"/>
</dbReference>
<dbReference type="PIR" id="T52044">
    <property type="entry name" value="T52044"/>
</dbReference>
<dbReference type="RefSeq" id="NP_175581.1">
    <property type="nucleotide sequence ID" value="NM_104048.4"/>
</dbReference>
<dbReference type="FunCoup" id="O82155">
    <property type="interactions" value="302"/>
</dbReference>
<dbReference type="STRING" id="3702.O82155"/>
<dbReference type="iPTMnet" id="O82155"/>
<dbReference type="PaxDb" id="3702-AT1G51700.1"/>
<dbReference type="ProteomicsDB" id="222105"/>
<dbReference type="EnsemblPlants" id="AT1G51700.1">
    <property type="protein sequence ID" value="AT1G51700.1"/>
    <property type="gene ID" value="AT1G51700"/>
</dbReference>
<dbReference type="GeneID" id="841595"/>
<dbReference type="Gramene" id="AT1G51700.1">
    <property type="protein sequence ID" value="AT1G51700.1"/>
    <property type="gene ID" value="AT1G51700"/>
</dbReference>
<dbReference type="KEGG" id="ath:AT1G51700"/>
<dbReference type="Araport" id="AT1G51700"/>
<dbReference type="TAIR" id="AT1G51700">
    <property type="gene designation" value="DOF1"/>
</dbReference>
<dbReference type="eggNOG" id="ENOG502QUYN">
    <property type="taxonomic scope" value="Eukaryota"/>
</dbReference>
<dbReference type="HOGENOM" id="CLU_036438_6_0_1"/>
<dbReference type="InParanoid" id="O82155"/>
<dbReference type="OMA" id="HHQSMIM"/>
<dbReference type="OrthoDB" id="1927254at2759"/>
<dbReference type="PhylomeDB" id="O82155"/>
<dbReference type="PRO" id="PR:O82155"/>
<dbReference type="Proteomes" id="UP000006548">
    <property type="component" value="Chromosome 1"/>
</dbReference>
<dbReference type="ExpressionAtlas" id="O82155">
    <property type="expression patterns" value="baseline and differential"/>
</dbReference>
<dbReference type="GO" id="GO:0005634">
    <property type="term" value="C:nucleus"/>
    <property type="evidence" value="ECO:0007669"/>
    <property type="project" value="UniProtKB-SubCell"/>
</dbReference>
<dbReference type="GO" id="GO:0003700">
    <property type="term" value="F:DNA-binding transcription factor activity"/>
    <property type="evidence" value="ECO:0000250"/>
    <property type="project" value="TAIR"/>
</dbReference>
<dbReference type="GO" id="GO:0000976">
    <property type="term" value="F:transcription cis-regulatory region binding"/>
    <property type="evidence" value="ECO:0000353"/>
    <property type="project" value="TAIR"/>
</dbReference>
<dbReference type="GO" id="GO:0008270">
    <property type="term" value="F:zinc ion binding"/>
    <property type="evidence" value="ECO:0007669"/>
    <property type="project" value="UniProtKB-KW"/>
</dbReference>
<dbReference type="GO" id="GO:0006355">
    <property type="term" value="P:regulation of DNA-templated transcription"/>
    <property type="evidence" value="ECO:0000304"/>
    <property type="project" value="TAIR"/>
</dbReference>
<dbReference type="InterPro" id="IPR045174">
    <property type="entry name" value="Dof"/>
</dbReference>
<dbReference type="InterPro" id="IPR003851">
    <property type="entry name" value="Znf_Dof"/>
</dbReference>
<dbReference type="PANTHER" id="PTHR31992">
    <property type="entry name" value="DOF ZINC FINGER PROTEIN DOF1.4-RELATED"/>
    <property type="match status" value="1"/>
</dbReference>
<dbReference type="PANTHER" id="PTHR31992:SF232">
    <property type="entry name" value="DOF ZINC FINGER PROTEIN DOF1.7"/>
    <property type="match status" value="1"/>
</dbReference>
<dbReference type="Pfam" id="PF02701">
    <property type="entry name" value="Zn_ribbon_Dof"/>
    <property type="match status" value="1"/>
</dbReference>
<dbReference type="PROSITE" id="PS01361">
    <property type="entry name" value="ZF_DOF_1"/>
    <property type="match status" value="1"/>
</dbReference>
<dbReference type="PROSITE" id="PS50884">
    <property type="entry name" value="ZF_DOF_2"/>
    <property type="match status" value="1"/>
</dbReference>
<protein>
    <recommendedName>
        <fullName>Dof zinc finger protein DOF1.7</fullName>
        <shortName>AtDOF1.7</shortName>
    </recommendedName>
</protein>
<gene>
    <name type="primary">DOF1.7</name>
    <name type="synonym">ADOF1</name>
    <name type="ordered locus">At1g51700</name>
    <name type="ORF">F19C24.9</name>
</gene>
<organism>
    <name type="scientific">Arabidopsis thaliana</name>
    <name type="common">Mouse-ear cress</name>
    <dbReference type="NCBI Taxonomy" id="3702"/>
    <lineage>
        <taxon>Eukaryota</taxon>
        <taxon>Viridiplantae</taxon>
        <taxon>Streptophyta</taxon>
        <taxon>Embryophyta</taxon>
        <taxon>Tracheophyta</taxon>
        <taxon>Spermatophyta</taxon>
        <taxon>Magnoliopsida</taxon>
        <taxon>eudicotyledons</taxon>
        <taxon>Gunneridae</taxon>
        <taxon>Pentapetalae</taxon>
        <taxon>rosids</taxon>
        <taxon>malvids</taxon>
        <taxon>Brassicales</taxon>
        <taxon>Brassicaceae</taxon>
        <taxon>Camelineae</taxon>
        <taxon>Arabidopsis</taxon>
    </lineage>
</organism>
<accession>O82155</accession>
<keyword id="KW-0238">DNA-binding</keyword>
<keyword id="KW-0479">Metal-binding</keyword>
<keyword id="KW-0539">Nucleus</keyword>
<keyword id="KW-1185">Reference proteome</keyword>
<keyword id="KW-0804">Transcription</keyword>
<keyword id="KW-0805">Transcription regulation</keyword>
<keyword id="KW-0862">Zinc</keyword>
<keyword id="KW-0863">Zinc-finger</keyword>
<feature type="chain" id="PRO_0000074269" description="Dof zinc finger protein DOF1.7">
    <location>
        <begin position="1"/>
        <end position="194"/>
    </location>
</feature>
<feature type="zinc finger region" description="Dof-type" evidence="2">
    <location>
        <begin position="33"/>
        <end position="87"/>
    </location>
</feature>
<feature type="region of interest" description="Disordered" evidence="3">
    <location>
        <begin position="74"/>
        <end position="125"/>
    </location>
</feature>
<feature type="compositionally biased region" description="Low complexity" evidence="3">
    <location>
        <begin position="88"/>
        <end position="99"/>
    </location>
</feature>
<feature type="compositionally biased region" description="Basic and acidic residues" evidence="3">
    <location>
        <begin position="104"/>
        <end position="121"/>
    </location>
</feature>
<feature type="binding site" evidence="2">
    <location>
        <position position="35"/>
    </location>
    <ligand>
        <name>Zn(2+)</name>
        <dbReference type="ChEBI" id="CHEBI:29105"/>
    </ligand>
</feature>
<feature type="binding site" evidence="2">
    <location>
        <position position="38"/>
    </location>
    <ligand>
        <name>Zn(2+)</name>
        <dbReference type="ChEBI" id="CHEBI:29105"/>
    </ligand>
</feature>
<feature type="binding site" evidence="2">
    <location>
        <position position="60"/>
    </location>
    <ligand>
        <name>Zn(2+)</name>
        <dbReference type="ChEBI" id="CHEBI:29105"/>
    </ligand>
</feature>
<feature type="binding site" evidence="2">
    <location>
        <position position="63"/>
    </location>
    <ligand>
        <name>Zn(2+)</name>
        <dbReference type="ChEBI" id="CHEBI:29105"/>
    </ligand>
</feature>
<evidence type="ECO:0000250" key="1"/>
<evidence type="ECO:0000255" key="2">
    <source>
        <dbReference type="PROSITE-ProRule" id="PRU00071"/>
    </source>
</evidence>
<evidence type="ECO:0000256" key="3">
    <source>
        <dbReference type="SAM" id="MobiDB-lite"/>
    </source>
</evidence>
<evidence type="ECO:0000305" key="4"/>
<name>DOF17_ARATH</name>
<reference key="1">
    <citation type="submission" date="1998-09" db="EMBL/GenBank/DDBJ databases">
        <title>cDNA cloning and gene expression of Dof zinc finger protein in Arabidopsis thaliana.</title>
        <authorList>
            <person name="Itagaki T."/>
            <person name="Kisu Y."/>
            <person name="Esaka M."/>
        </authorList>
    </citation>
    <scope>NUCLEOTIDE SEQUENCE [MRNA]</scope>
    <source>
        <tissue>Seedling</tissue>
    </source>
</reference>
<reference key="2">
    <citation type="journal article" date="2000" name="Nature">
        <title>Sequence and analysis of chromosome 1 of the plant Arabidopsis thaliana.</title>
        <authorList>
            <person name="Theologis A."/>
            <person name="Ecker J.R."/>
            <person name="Palm C.J."/>
            <person name="Federspiel N.A."/>
            <person name="Kaul S."/>
            <person name="White O."/>
            <person name="Alonso J."/>
            <person name="Altafi H."/>
            <person name="Araujo R."/>
            <person name="Bowman C.L."/>
            <person name="Brooks S.Y."/>
            <person name="Buehler E."/>
            <person name="Chan A."/>
            <person name="Chao Q."/>
            <person name="Chen H."/>
            <person name="Cheuk R.F."/>
            <person name="Chin C.W."/>
            <person name="Chung M.K."/>
            <person name="Conn L."/>
            <person name="Conway A.B."/>
            <person name="Conway A.R."/>
            <person name="Creasy T.H."/>
            <person name="Dewar K."/>
            <person name="Dunn P."/>
            <person name="Etgu P."/>
            <person name="Feldblyum T.V."/>
            <person name="Feng J.-D."/>
            <person name="Fong B."/>
            <person name="Fujii C.Y."/>
            <person name="Gill J.E."/>
            <person name="Goldsmith A.D."/>
            <person name="Haas B."/>
            <person name="Hansen N.F."/>
            <person name="Hughes B."/>
            <person name="Huizar L."/>
            <person name="Hunter J.L."/>
            <person name="Jenkins J."/>
            <person name="Johnson-Hopson C."/>
            <person name="Khan S."/>
            <person name="Khaykin E."/>
            <person name="Kim C.J."/>
            <person name="Koo H.L."/>
            <person name="Kremenetskaia I."/>
            <person name="Kurtz D.B."/>
            <person name="Kwan A."/>
            <person name="Lam B."/>
            <person name="Langin-Hooper S."/>
            <person name="Lee A."/>
            <person name="Lee J.M."/>
            <person name="Lenz C.A."/>
            <person name="Li J.H."/>
            <person name="Li Y.-P."/>
            <person name="Lin X."/>
            <person name="Liu S.X."/>
            <person name="Liu Z.A."/>
            <person name="Luros J.S."/>
            <person name="Maiti R."/>
            <person name="Marziali A."/>
            <person name="Militscher J."/>
            <person name="Miranda M."/>
            <person name="Nguyen M."/>
            <person name="Nierman W.C."/>
            <person name="Osborne B.I."/>
            <person name="Pai G."/>
            <person name="Peterson J."/>
            <person name="Pham P.K."/>
            <person name="Rizzo M."/>
            <person name="Rooney T."/>
            <person name="Rowley D."/>
            <person name="Sakano H."/>
            <person name="Salzberg S.L."/>
            <person name="Schwartz J.R."/>
            <person name="Shinn P."/>
            <person name="Southwick A.M."/>
            <person name="Sun H."/>
            <person name="Tallon L.J."/>
            <person name="Tambunga G."/>
            <person name="Toriumi M.J."/>
            <person name="Town C.D."/>
            <person name="Utterback T."/>
            <person name="Van Aken S."/>
            <person name="Vaysberg M."/>
            <person name="Vysotskaia V.S."/>
            <person name="Walker M."/>
            <person name="Wu D."/>
            <person name="Yu G."/>
            <person name="Fraser C.M."/>
            <person name="Venter J.C."/>
            <person name="Davis R.W."/>
        </authorList>
    </citation>
    <scope>NUCLEOTIDE SEQUENCE [LARGE SCALE GENOMIC DNA]</scope>
    <source>
        <strain>cv. Columbia</strain>
    </source>
</reference>
<reference key="3">
    <citation type="journal article" date="2017" name="Plant J.">
        <title>Araport11: a complete reannotation of the Arabidopsis thaliana reference genome.</title>
        <authorList>
            <person name="Cheng C.Y."/>
            <person name="Krishnakumar V."/>
            <person name="Chan A.P."/>
            <person name="Thibaud-Nissen F."/>
            <person name="Schobel S."/>
            <person name="Town C.D."/>
        </authorList>
    </citation>
    <scope>GENOME REANNOTATION</scope>
    <source>
        <strain>cv. Columbia</strain>
    </source>
</reference>
<reference key="4">
    <citation type="journal article" date="2002" name="Trends Plant Sci.">
        <title>The Dof family of plant transcription factors.</title>
        <authorList>
            <person name="Yanagisawa S."/>
        </authorList>
    </citation>
    <scope>GENE FAMILY</scope>
    <scope>NOMENCLATURE</scope>
</reference>
<comment type="function">
    <text evidence="1">Transcription factor that binds specifically to a 5'-AA[AG]G-3' consensus core sequence.</text>
</comment>
<comment type="subcellular location">
    <subcellularLocation>
        <location evidence="4">Nucleus</location>
    </subcellularLocation>
</comment>
<sequence>MQDLTSAAAYYHQSMMMTTAKQNQPELPEQEQLKCPRCDSPNTKFCYYNNYNLSQPRHFCKNCRRYWTKGGALRNIPVGGGTRKSNKRSGSSPSSNLKNQTVAEKPDHHGSGSEEKEERVSGQEMNPTRMLYGLPVGDPNGASFSSLLASNMQMGGLVYESGSRWLPGMDLGLGSVRRSDDTWTDLAMNRMEKN</sequence>
<proteinExistence type="evidence at transcript level"/>